<gene>
    <name type="primary">mt-cyb</name>
    <name type="synonym">cob</name>
    <name type="synonym">cytb</name>
    <name type="synonym">mtcyb</name>
</gene>
<organism>
    <name type="scientific">Chauliodus sloani</name>
    <name type="common">Sloane's viperfish</name>
    <dbReference type="NCBI Taxonomy" id="68509"/>
    <lineage>
        <taxon>Eukaryota</taxon>
        <taxon>Metazoa</taxon>
        <taxon>Chordata</taxon>
        <taxon>Craniata</taxon>
        <taxon>Vertebrata</taxon>
        <taxon>Euteleostomi</taxon>
        <taxon>Actinopterygii</taxon>
        <taxon>Neopterygii</taxon>
        <taxon>Teleostei</taxon>
        <taxon>Stomiati</taxon>
        <taxon>Stomiiformes</taxon>
        <taxon>Stomiidae</taxon>
        <taxon>Chauliodontinae</taxon>
        <taxon>Chauliodus</taxon>
    </lineage>
</organism>
<geneLocation type="mitochondrion"/>
<name>CYB_CHASL</name>
<accession>Q94TI3</accession>
<keyword id="KW-0249">Electron transport</keyword>
<keyword id="KW-0349">Heme</keyword>
<keyword id="KW-0408">Iron</keyword>
<keyword id="KW-0472">Membrane</keyword>
<keyword id="KW-0479">Metal-binding</keyword>
<keyword id="KW-0496">Mitochondrion</keyword>
<keyword id="KW-0999">Mitochondrion inner membrane</keyword>
<keyword id="KW-0679">Respiratory chain</keyword>
<keyword id="KW-0812">Transmembrane</keyword>
<keyword id="KW-1133">Transmembrane helix</keyword>
<keyword id="KW-0813">Transport</keyword>
<keyword id="KW-0830">Ubiquinone</keyword>
<reference key="1">
    <citation type="journal article" date="2001" name="Mol. Biol. Evol.">
        <title>Mitogenomic exploration of higher teleostean phylogenies: a case study for moderate-scale evolutionary genomics with 38 newly determined complete mitochondrial DNA sequences.</title>
        <authorList>
            <person name="Miya M."/>
            <person name="Kawaguchi A."/>
            <person name="Nishida M."/>
        </authorList>
    </citation>
    <scope>NUCLEOTIDE SEQUENCE [GENOMIC DNA]</scope>
</reference>
<comment type="function">
    <text evidence="2">Component of the ubiquinol-cytochrome c reductase complex (complex III or cytochrome b-c1 complex) that is part of the mitochondrial respiratory chain. The b-c1 complex mediates electron transfer from ubiquinol to cytochrome c. Contributes to the generation of a proton gradient across the mitochondrial membrane that is then used for ATP synthesis.</text>
</comment>
<comment type="cofactor">
    <cofactor evidence="2">
        <name>heme b</name>
        <dbReference type="ChEBI" id="CHEBI:60344"/>
    </cofactor>
    <text evidence="2">Binds 2 heme b groups non-covalently.</text>
</comment>
<comment type="subunit">
    <text evidence="2">The cytochrome bc1 complex contains 3 respiratory subunits (MT-CYB, CYC1 and UQCRFS1), 2 core proteins (UQCRC1 and UQCRC2) and probably 6 low-molecular weight proteins.</text>
</comment>
<comment type="subcellular location">
    <subcellularLocation>
        <location evidence="2">Mitochondrion inner membrane</location>
        <topology evidence="2">Multi-pass membrane protein</topology>
    </subcellularLocation>
</comment>
<comment type="miscellaneous">
    <text evidence="1">Heme 1 (or BL or b562) is low-potential and absorbs at about 562 nm, and heme 2 (or BH or b566) is high-potential and absorbs at about 566 nm.</text>
</comment>
<comment type="similarity">
    <text evidence="3 4">Belongs to the cytochrome b family.</text>
</comment>
<comment type="caution">
    <text evidence="2">The full-length protein contains only eight transmembrane helices, not nine as predicted by bioinformatics tools.</text>
</comment>
<proteinExistence type="inferred from homology"/>
<feature type="chain" id="PRO_0000060770" description="Cytochrome b">
    <location>
        <begin position="1"/>
        <end position="378"/>
    </location>
</feature>
<feature type="transmembrane region" description="Helical" evidence="2">
    <location>
        <begin position="33"/>
        <end position="53"/>
    </location>
</feature>
<feature type="transmembrane region" description="Helical" evidence="2">
    <location>
        <begin position="77"/>
        <end position="98"/>
    </location>
</feature>
<feature type="transmembrane region" description="Helical" evidence="2">
    <location>
        <begin position="113"/>
        <end position="133"/>
    </location>
</feature>
<feature type="transmembrane region" description="Helical" evidence="2">
    <location>
        <begin position="178"/>
        <end position="198"/>
    </location>
</feature>
<feature type="transmembrane region" description="Helical" evidence="2">
    <location>
        <begin position="226"/>
        <end position="246"/>
    </location>
</feature>
<feature type="transmembrane region" description="Helical" evidence="2">
    <location>
        <begin position="288"/>
        <end position="308"/>
    </location>
</feature>
<feature type="transmembrane region" description="Helical" evidence="2">
    <location>
        <begin position="320"/>
        <end position="340"/>
    </location>
</feature>
<feature type="transmembrane region" description="Helical" evidence="2">
    <location>
        <begin position="347"/>
        <end position="367"/>
    </location>
</feature>
<feature type="binding site" description="axial binding residue" evidence="2">
    <location>
        <position position="83"/>
    </location>
    <ligand>
        <name>heme b</name>
        <dbReference type="ChEBI" id="CHEBI:60344"/>
        <label>b562</label>
    </ligand>
    <ligandPart>
        <name>Fe</name>
        <dbReference type="ChEBI" id="CHEBI:18248"/>
    </ligandPart>
</feature>
<feature type="binding site" description="axial binding residue" evidence="2">
    <location>
        <position position="97"/>
    </location>
    <ligand>
        <name>heme b</name>
        <dbReference type="ChEBI" id="CHEBI:60344"/>
        <label>b566</label>
    </ligand>
    <ligandPart>
        <name>Fe</name>
        <dbReference type="ChEBI" id="CHEBI:18248"/>
    </ligandPart>
</feature>
<feature type="binding site" description="axial binding residue" evidence="2">
    <location>
        <position position="182"/>
    </location>
    <ligand>
        <name>heme b</name>
        <dbReference type="ChEBI" id="CHEBI:60344"/>
        <label>b562</label>
    </ligand>
    <ligandPart>
        <name>Fe</name>
        <dbReference type="ChEBI" id="CHEBI:18248"/>
    </ligandPart>
</feature>
<feature type="binding site" description="axial binding residue" evidence="2">
    <location>
        <position position="196"/>
    </location>
    <ligand>
        <name>heme b</name>
        <dbReference type="ChEBI" id="CHEBI:60344"/>
        <label>b566</label>
    </ligand>
    <ligandPart>
        <name>Fe</name>
        <dbReference type="ChEBI" id="CHEBI:18248"/>
    </ligandPart>
</feature>
<feature type="binding site" evidence="2">
    <location>
        <position position="201"/>
    </location>
    <ligand>
        <name>a ubiquinone</name>
        <dbReference type="ChEBI" id="CHEBI:16389"/>
    </ligand>
</feature>
<dbReference type="EMBL" id="AP002915">
    <property type="protein sequence ID" value="BAB69987.1"/>
    <property type="molecule type" value="Genomic_DNA"/>
</dbReference>
<dbReference type="RefSeq" id="NP_443228.1">
    <property type="nucleotide sequence ID" value="NC_003159.1"/>
</dbReference>
<dbReference type="SMR" id="Q94TI3"/>
<dbReference type="GeneID" id="803994"/>
<dbReference type="CTD" id="4519"/>
<dbReference type="GO" id="GO:0005743">
    <property type="term" value="C:mitochondrial inner membrane"/>
    <property type="evidence" value="ECO:0007669"/>
    <property type="project" value="UniProtKB-SubCell"/>
</dbReference>
<dbReference type="GO" id="GO:0045275">
    <property type="term" value="C:respiratory chain complex III"/>
    <property type="evidence" value="ECO:0007669"/>
    <property type="project" value="InterPro"/>
</dbReference>
<dbReference type="GO" id="GO:0046872">
    <property type="term" value="F:metal ion binding"/>
    <property type="evidence" value="ECO:0007669"/>
    <property type="project" value="UniProtKB-KW"/>
</dbReference>
<dbReference type="GO" id="GO:0008121">
    <property type="term" value="F:ubiquinol-cytochrome-c reductase activity"/>
    <property type="evidence" value="ECO:0007669"/>
    <property type="project" value="InterPro"/>
</dbReference>
<dbReference type="GO" id="GO:0006122">
    <property type="term" value="P:mitochondrial electron transport, ubiquinol to cytochrome c"/>
    <property type="evidence" value="ECO:0007669"/>
    <property type="project" value="TreeGrafter"/>
</dbReference>
<dbReference type="CDD" id="cd00290">
    <property type="entry name" value="cytochrome_b_C"/>
    <property type="match status" value="1"/>
</dbReference>
<dbReference type="CDD" id="cd00284">
    <property type="entry name" value="Cytochrome_b_N"/>
    <property type="match status" value="1"/>
</dbReference>
<dbReference type="FunFam" id="1.20.810.10:FF:000002">
    <property type="entry name" value="Cytochrome b"/>
    <property type="match status" value="1"/>
</dbReference>
<dbReference type="Gene3D" id="1.20.810.10">
    <property type="entry name" value="Cytochrome Bc1 Complex, Chain C"/>
    <property type="match status" value="1"/>
</dbReference>
<dbReference type="InterPro" id="IPR005798">
    <property type="entry name" value="Cyt_b/b6_C"/>
</dbReference>
<dbReference type="InterPro" id="IPR036150">
    <property type="entry name" value="Cyt_b/b6_C_sf"/>
</dbReference>
<dbReference type="InterPro" id="IPR005797">
    <property type="entry name" value="Cyt_b/b6_N"/>
</dbReference>
<dbReference type="InterPro" id="IPR027387">
    <property type="entry name" value="Cytb/b6-like_sf"/>
</dbReference>
<dbReference type="InterPro" id="IPR030689">
    <property type="entry name" value="Cytochrome_b"/>
</dbReference>
<dbReference type="InterPro" id="IPR048260">
    <property type="entry name" value="Cytochrome_b_C_euk/bac"/>
</dbReference>
<dbReference type="InterPro" id="IPR048259">
    <property type="entry name" value="Cytochrome_b_N_euk/bac"/>
</dbReference>
<dbReference type="InterPro" id="IPR016174">
    <property type="entry name" value="Di-haem_cyt_TM"/>
</dbReference>
<dbReference type="PANTHER" id="PTHR19271">
    <property type="entry name" value="CYTOCHROME B"/>
    <property type="match status" value="1"/>
</dbReference>
<dbReference type="PANTHER" id="PTHR19271:SF16">
    <property type="entry name" value="CYTOCHROME B"/>
    <property type="match status" value="1"/>
</dbReference>
<dbReference type="Pfam" id="PF00032">
    <property type="entry name" value="Cytochrom_B_C"/>
    <property type="match status" value="1"/>
</dbReference>
<dbReference type="Pfam" id="PF00033">
    <property type="entry name" value="Cytochrome_B"/>
    <property type="match status" value="1"/>
</dbReference>
<dbReference type="PIRSF" id="PIRSF038885">
    <property type="entry name" value="COB"/>
    <property type="match status" value="1"/>
</dbReference>
<dbReference type="SUPFAM" id="SSF81648">
    <property type="entry name" value="a domain/subunit of cytochrome bc1 complex (Ubiquinol-cytochrome c reductase)"/>
    <property type="match status" value="1"/>
</dbReference>
<dbReference type="SUPFAM" id="SSF81342">
    <property type="entry name" value="Transmembrane di-heme cytochromes"/>
    <property type="match status" value="1"/>
</dbReference>
<dbReference type="PROSITE" id="PS51003">
    <property type="entry name" value="CYTB_CTER"/>
    <property type="match status" value="1"/>
</dbReference>
<dbReference type="PROSITE" id="PS51002">
    <property type="entry name" value="CYTB_NTER"/>
    <property type="match status" value="1"/>
</dbReference>
<protein>
    <recommendedName>
        <fullName>Cytochrome b</fullName>
    </recommendedName>
    <alternativeName>
        <fullName>Complex III subunit 3</fullName>
    </alternativeName>
    <alternativeName>
        <fullName>Complex III subunit III</fullName>
    </alternativeName>
    <alternativeName>
        <fullName>Cytochrome b-c1 complex subunit 3</fullName>
    </alternativeName>
    <alternativeName>
        <fullName>Ubiquinol-cytochrome-c reductase complex cytochrome b subunit</fullName>
    </alternativeName>
</protein>
<sequence>MASLRKTHPLLKIANHALVDLPAPLNISAWWNFGSLLGLCLASQIVTGLFLAMHYTSDISTAFSSVTHICRDVNYGWMIRNMHANGASFFFICIYLHIGRGLYYGSYLYKETWNIGVILFLLTMMTAFVGYVLPWGQMSFWGATVITNLLSAVPYAGEALVQWIWGGFSVDNATLTRFFAFHFLLPFVVLAATLLHLLFLHETGSNNPAGLNSDADKVPFHPYFSYKDLLGFAILLLALTSFALFAPNLLGDPDNFIPANPLVTPPHIKPEWYFLFAYAILRSIPNKLGGVLALLFSILVLMLVPLLHTSKMRGSTYRPLTQLLFWALVADVLILTWIGGMPVEAPYIVIGQLASLIYFSIFLAFLPLAGLLENQALK</sequence>
<evidence type="ECO:0000250" key="1"/>
<evidence type="ECO:0000250" key="2">
    <source>
        <dbReference type="UniProtKB" id="P00157"/>
    </source>
</evidence>
<evidence type="ECO:0000255" key="3">
    <source>
        <dbReference type="PROSITE-ProRule" id="PRU00967"/>
    </source>
</evidence>
<evidence type="ECO:0000255" key="4">
    <source>
        <dbReference type="PROSITE-ProRule" id="PRU00968"/>
    </source>
</evidence>